<evidence type="ECO:0000250" key="1"/>
<evidence type="ECO:0000255" key="2">
    <source>
        <dbReference type="PROSITE-ProRule" id="PRU00042"/>
    </source>
</evidence>
<evidence type="ECO:0000269" key="3">
    <source>
    </source>
</evidence>
<evidence type="ECO:0000305" key="4"/>
<protein>
    <recommendedName>
        <fullName>Zinc finger protein SNAI3</fullName>
    </recommendedName>
    <alternativeName>
        <fullName>Protein snail homolog 3</fullName>
    </alternativeName>
    <alternativeName>
        <fullName>Snail-related gene from muscle cells</fullName>
    </alternativeName>
    <alternativeName>
        <fullName>Zinc finger protein 293</fullName>
    </alternativeName>
</protein>
<reference key="1">
    <citation type="journal article" date="2000" name="Nucleic Acids Res.">
        <title>A novel snail-related transcription factor Smuc regulates basic helix-loop-helix transcription factor activities via specific E-box motifs.</title>
        <authorList>
            <person name="Kataoka H."/>
            <person name="Murayama T."/>
            <person name="Yokode M."/>
            <person name="Mori S."/>
            <person name="Sano H."/>
            <person name="Ozaki H."/>
            <person name="Yokota Y."/>
            <person name="Nishikawa S."/>
            <person name="Kita T."/>
        </authorList>
    </citation>
    <scope>NUCLEOTIDE SEQUENCE [MRNA]</scope>
    <scope>FUNCTION</scope>
    <scope>SUBCELLULAR LOCATION</scope>
    <scope>TISSUE SPECIFICITY</scope>
    <scope>DEVELOPMENTAL STAGE</scope>
    <source>
        <strain>C57BL/6J</strain>
        <tissue>Skeletal muscle</tissue>
    </source>
</reference>
<reference key="2">
    <citation type="submission" date="1999-10" db="EMBL/GenBank/DDBJ databases">
        <title>Molecular cloning of a novel mouse snail-related gene.</title>
        <authorList>
            <person name="Seki K."/>
            <person name="Fujimori T."/>
            <person name="Nabeshima Y."/>
            <person name="Robertson E.J."/>
        </authorList>
    </citation>
    <scope>NUCLEOTIDE SEQUENCE [MRNA]</scope>
    <source>
        <strain>Swiss Webster / NIH</strain>
    </source>
</reference>
<reference key="3">
    <citation type="journal article" date="2005" name="Science">
        <title>The transcriptional landscape of the mammalian genome.</title>
        <authorList>
            <person name="Carninci P."/>
            <person name="Kasukawa T."/>
            <person name="Katayama S."/>
            <person name="Gough J."/>
            <person name="Frith M.C."/>
            <person name="Maeda N."/>
            <person name="Oyama R."/>
            <person name="Ravasi T."/>
            <person name="Lenhard B."/>
            <person name="Wells C."/>
            <person name="Kodzius R."/>
            <person name="Shimokawa K."/>
            <person name="Bajic V.B."/>
            <person name="Brenner S.E."/>
            <person name="Batalov S."/>
            <person name="Forrest A.R."/>
            <person name="Zavolan M."/>
            <person name="Davis M.J."/>
            <person name="Wilming L.G."/>
            <person name="Aidinis V."/>
            <person name="Allen J.E."/>
            <person name="Ambesi-Impiombato A."/>
            <person name="Apweiler R."/>
            <person name="Aturaliya R.N."/>
            <person name="Bailey T.L."/>
            <person name="Bansal M."/>
            <person name="Baxter L."/>
            <person name="Beisel K.W."/>
            <person name="Bersano T."/>
            <person name="Bono H."/>
            <person name="Chalk A.M."/>
            <person name="Chiu K.P."/>
            <person name="Choudhary V."/>
            <person name="Christoffels A."/>
            <person name="Clutterbuck D.R."/>
            <person name="Crowe M.L."/>
            <person name="Dalla E."/>
            <person name="Dalrymple B.P."/>
            <person name="de Bono B."/>
            <person name="Della Gatta G."/>
            <person name="di Bernardo D."/>
            <person name="Down T."/>
            <person name="Engstrom P."/>
            <person name="Fagiolini M."/>
            <person name="Faulkner G."/>
            <person name="Fletcher C.F."/>
            <person name="Fukushima T."/>
            <person name="Furuno M."/>
            <person name="Futaki S."/>
            <person name="Gariboldi M."/>
            <person name="Georgii-Hemming P."/>
            <person name="Gingeras T.R."/>
            <person name="Gojobori T."/>
            <person name="Green R.E."/>
            <person name="Gustincich S."/>
            <person name="Harbers M."/>
            <person name="Hayashi Y."/>
            <person name="Hensch T.K."/>
            <person name="Hirokawa N."/>
            <person name="Hill D."/>
            <person name="Huminiecki L."/>
            <person name="Iacono M."/>
            <person name="Ikeo K."/>
            <person name="Iwama A."/>
            <person name="Ishikawa T."/>
            <person name="Jakt M."/>
            <person name="Kanapin A."/>
            <person name="Katoh M."/>
            <person name="Kawasawa Y."/>
            <person name="Kelso J."/>
            <person name="Kitamura H."/>
            <person name="Kitano H."/>
            <person name="Kollias G."/>
            <person name="Krishnan S.P."/>
            <person name="Kruger A."/>
            <person name="Kummerfeld S.K."/>
            <person name="Kurochkin I.V."/>
            <person name="Lareau L.F."/>
            <person name="Lazarevic D."/>
            <person name="Lipovich L."/>
            <person name="Liu J."/>
            <person name="Liuni S."/>
            <person name="McWilliam S."/>
            <person name="Madan Babu M."/>
            <person name="Madera M."/>
            <person name="Marchionni L."/>
            <person name="Matsuda H."/>
            <person name="Matsuzawa S."/>
            <person name="Miki H."/>
            <person name="Mignone F."/>
            <person name="Miyake S."/>
            <person name="Morris K."/>
            <person name="Mottagui-Tabar S."/>
            <person name="Mulder N."/>
            <person name="Nakano N."/>
            <person name="Nakauchi H."/>
            <person name="Ng P."/>
            <person name="Nilsson R."/>
            <person name="Nishiguchi S."/>
            <person name="Nishikawa S."/>
            <person name="Nori F."/>
            <person name="Ohara O."/>
            <person name="Okazaki Y."/>
            <person name="Orlando V."/>
            <person name="Pang K.C."/>
            <person name="Pavan W.J."/>
            <person name="Pavesi G."/>
            <person name="Pesole G."/>
            <person name="Petrovsky N."/>
            <person name="Piazza S."/>
            <person name="Reed J."/>
            <person name="Reid J.F."/>
            <person name="Ring B.Z."/>
            <person name="Ringwald M."/>
            <person name="Rost B."/>
            <person name="Ruan Y."/>
            <person name="Salzberg S.L."/>
            <person name="Sandelin A."/>
            <person name="Schneider C."/>
            <person name="Schoenbach C."/>
            <person name="Sekiguchi K."/>
            <person name="Semple C.A."/>
            <person name="Seno S."/>
            <person name="Sessa L."/>
            <person name="Sheng Y."/>
            <person name="Shibata Y."/>
            <person name="Shimada H."/>
            <person name="Shimada K."/>
            <person name="Silva D."/>
            <person name="Sinclair B."/>
            <person name="Sperling S."/>
            <person name="Stupka E."/>
            <person name="Sugiura K."/>
            <person name="Sultana R."/>
            <person name="Takenaka Y."/>
            <person name="Taki K."/>
            <person name="Tammoja K."/>
            <person name="Tan S.L."/>
            <person name="Tang S."/>
            <person name="Taylor M.S."/>
            <person name="Tegner J."/>
            <person name="Teichmann S.A."/>
            <person name="Ueda H.R."/>
            <person name="van Nimwegen E."/>
            <person name="Verardo R."/>
            <person name="Wei C.L."/>
            <person name="Yagi K."/>
            <person name="Yamanishi H."/>
            <person name="Zabarovsky E."/>
            <person name="Zhu S."/>
            <person name="Zimmer A."/>
            <person name="Hide W."/>
            <person name="Bult C."/>
            <person name="Grimmond S.M."/>
            <person name="Teasdale R.D."/>
            <person name="Liu E.T."/>
            <person name="Brusic V."/>
            <person name="Quackenbush J."/>
            <person name="Wahlestedt C."/>
            <person name="Mattick J.S."/>
            <person name="Hume D.A."/>
            <person name="Kai C."/>
            <person name="Sasaki D."/>
            <person name="Tomaru Y."/>
            <person name="Fukuda S."/>
            <person name="Kanamori-Katayama M."/>
            <person name="Suzuki M."/>
            <person name="Aoki J."/>
            <person name="Arakawa T."/>
            <person name="Iida J."/>
            <person name="Imamura K."/>
            <person name="Itoh M."/>
            <person name="Kato T."/>
            <person name="Kawaji H."/>
            <person name="Kawagashira N."/>
            <person name="Kawashima T."/>
            <person name="Kojima M."/>
            <person name="Kondo S."/>
            <person name="Konno H."/>
            <person name="Nakano K."/>
            <person name="Ninomiya N."/>
            <person name="Nishio T."/>
            <person name="Okada M."/>
            <person name="Plessy C."/>
            <person name="Shibata K."/>
            <person name="Shiraki T."/>
            <person name="Suzuki S."/>
            <person name="Tagami M."/>
            <person name="Waki K."/>
            <person name="Watahiki A."/>
            <person name="Okamura-Oho Y."/>
            <person name="Suzuki H."/>
            <person name="Kawai J."/>
            <person name="Hayashizaki Y."/>
        </authorList>
    </citation>
    <scope>NUCLEOTIDE SEQUENCE [LARGE SCALE MRNA]</scope>
    <source>
        <strain>C57BL/6J</strain>
        <strain>NOD</strain>
        <tissue>Dendritic cell</tissue>
        <tissue>Thymus</tissue>
    </source>
</reference>
<reference key="4">
    <citation type="journal article" date="2004" name="Genome Res.">
        <title>The status, quality, and expansion of the NIH full-length cDNA project: the Mammalian Gene Collection (MGC).</title>
        <authorList>
            <consortium name="The MGC Project Team"/>
        </authorList>
    </citation>
    <scope>NUCLEOTIDE SEQUENCE [LARGE SCALE MRNA]</scope>
</reference>
<name>SNAI3_MOUSE</name>
<proteinExistence type="evidence at transcript level"/>
<sequence>MPRSFLVKTHSSHRVPNYGKLETLREANGSCSACKELAGSRHLPDEEAPCNPSDPLQPWDSTSAVACISLPLLPNHRETLGVSGPEPQETSWVGPRAAQAPSVTLKDSFTLPPLLVLPTRWPPILGPDGALNEHLRAEGTSRVPGSFECIHCHRPYHTLAGLARHQQLHCHLPTGRAFTCRYCDKEYASLGALKMHIRTHTLPCICKVCGKAFSRPWLLQGHIRTHTGEKPYTCSHCSRAFADRSNLRAHLQTHVGTKKYRCAVCPKAFSRMSLLARHEEAGCCPGP</sequence>
<comment type="function">
    <text evidence="3">Seems to inhibit myoblast differentiation. Transcriptional repressor of E-box-dependent transactivation of downstream myogenic bHLHs genes. Binds preferentially to the canonical E-box sequences 5'-CAGGTG-3' and 5'-CACCTG-3'.</text>
</comment>
<comment type="subcellular location">
    <subcellularLocation>
        <location evidence="3">Nucleus</location>
    </subcellularLocation>
</comment>
<comment type="tissue specificity">
    <text evidence="3">Highly expressed in skeletal muscle and thymus. Lower expression in heart, lung and spleen.</text>
</comment>
<comment type="developmental stage">
    <text evidence="3">Expressed at 7 dpc, higher expression observed in stages 15 dpc and 18 dpc.</text>
</comment>
<comment type="domain">
    <text>Binds E-box via C2H2-type zinc finger domain.</text>
</comment>
<comment type="similarity">
    <text evidence="4">Belongs to the snail C2H2-type zinc-finger protein family.</text>
</comment>
<feature type="chain" id="PRO_0000330038" description="Zinc finger protein SNAI3">
    <location>
        <begin position="1"/>
        <end position="287"/>
    </location>
</feature>
<feature type="zinc finger region" description="C2H2-type 1" evidence="2">
    <location>
        <begin position="147"/>
        <end position="169"/>
    </location>
</feature>
<feature type="zinc finger region" description="C2H2-type 2" evidence="2">
    <location>
        <begin position="178"/>
        <end position="200"/>
    </location>
</feature>
<feature type="zinc finger region" description="C2H2-type 3" evidence="2">
    <location>
        <begin position="204"/>
        <end position="226"/>
    </location>
</feature>
<feature type="zinc finger region" description="C2H2-type 4" evidence="2">
    <location>
        <begin position="232"/>
        <end position="254"/>
    </location>
</feature>
<feature type="zinc finger region" description="C2H2-type 5; degenerate" evidence="2">
    <location>
        <begin position="260"/>
        <end position="282"/>
    </location>
</feature>
<feature type="region of interest" description="SNAG domain" evidence="1">
    <location>
        <begin position="1"/>
        <end position="20"/>
    </location>
</feature>
<feature type="sequence conflict" description="In Ref. 4; AAI00727." evidence="4" ref="4">
    <original>N</original>
    <variation>S</variation>
    <location>
        <position position="75"/>
    </location>
</feature>
<feature type="sequence conflict" description="In Ref. 3; BAC40828." evidence="4" ref="3">
    <original>H</original>
    <variation>Y</variation>
    <location>
        <position position="169"/>
    </location>
</feature>
<accession>Q9QY31</accession>
<accession>Q3U3U2</accession>
<accession>Q496S5</accession>
<accession>Q8C244</accession>
<keyword id="KW-0238">DNA-binding</keyword>
<keyword id="KW-0479">Metal-binding</keyword>
<keyword id="KW-0539">Nucleus</keyword>
<keyword id="KW-1185">Reference proteome</keyword>
<keyword id="KW-0677">Repeat</keyword>
<keyword id="KW-0678">Repressor</keyword>
<keyword id="KW-0804">Transcription</keyword>
<keyword id="KW-0805">Transcription regulation</keyword>
<keyword id="KW-0862">Zinc</keyword>
<keyword id="KW-0863">Zinc-finger</keyword>
<dbReference type="EMBL" id="AF133714">
    <property type="protein sequence ID" value="AAF22956.1"/>
    <property type="molecule type" value="mRNA"/>
</dbReference>
<dbReference type="EMBL" id="AF195655">
    <property type="protein sequence ID" value="AAQ13827.1"/>
    <property type="molecule type" value="mRNA"/>
</dbReference>
<dbReference type="EMBL" id="AK042234">
    <property type="protein sequence ID" value="BAC31201.1"/>
    <property type="molecule type" value="mRNA"/>
</dbReference>
<dbReference type="EMBL" id="AK089285">
    <property type="protein sequence ID" value="BAC40828.1"/>
    <property type="molecule type" value="mRNA"/>
</dbReference>
<dbReference type="EMBL" id="AK153633">
    <property type="protein sequence ID" value="BAE32128.1"/>
    <property type="molecule type" value="mRNA"/>
</dbReference>
<dbReference type="EMBL" id="AK154585">
    <property type="protein sequence ID" value="BAE32693.1"/>
    <property type="molecule type" value="mRNA"/>
</dbReference>
<dbReference type="EMBL" id="BC100724">
    <property type="protein sequence ID" value="AAI00725.1"/>
    <property type="molecule type" value="mRNA"/>
</dbReference>
<dbReference type="EMBL" id="BC100726">
    <property type="protein sequence ID" value="AAI00727.1"/>
    <property type="molecule type" value="mRNA"/>
</dbReference>
<dbReference type="EMBL" id="BC100727">
    <property type="protein sequence ID" value="AAI00728.1"/>
    <property type="molecule type" value="mRNA"/>
</dbReference>
<dbReference type="CCDS" id="CCDS22739.1"/>
<dbReference type="RefSeq" id="NP_038942.1">
    <property type="nucleotide sequence ID" value="NM_013914.3"/>
</dbReference>
<dbReference type="SMR" id="Q9QY31"/>
<dbReference type="FunCoup" id="Q9QY31">
    <property type="interactions" value="143"/>
</dbReference>
<dbReference type="STRING" id="10090.ENSMUSP00000006762"/>
<dbReference type="PhosphoSitePlus" id="Q9QY31"/>
<dbReference type="SwissPalm" id="Q9QY31"/>
<dbReference type="PaxDb" id="10090-ENSMUSP00000006762"/>
<dbReference type="ProteomicsDB" id="261591"/>
<dbReference type="Antibodypedia" id="17289">
    <property type="antibodies" value="123 antibodies from 26 providers"/>
</dbReference>
<dbReference type="DNASU" id="30927"/>
<dbReference type="Ensembl" id="ENSMUST00000006762.7">
    <property type="protein sequence ID" value="ENSMUSP00000006762.6"/>
    <property type="gene ID" value="ENSMUSG00000006587.7"/>
</dbReference>
<dbReference type="GeneID" id="30927"/>
<dbReference type="KEGG" id="mmu:30927"/>
<dbReference type="UCSC" id="uc009nsw.1">
    <property type="organism name" value="mouse"/>
</dbReference>
<dbReference type="AGR" id="MGI:1353563"/>
<dbReference type="CTD" id="333929"/>
<dbReference type="MGI" id="MGI:1353563">
    <property type="gene designation" value="Snai3"/>
</dbReference>
<dbReference type="VEuPathDB" id="HostDB:ENSMUSG00000006587"/>
<dbReference type="eggNOG" id="KOG2462">
    <property type="taxonomic scope" value="Eukaryota"/>
</dbReference>
<dbReference type="GeneTree" id="ENSGT00940000154511"/>
<dbReference type="HOGENOM" id="CLU_002678_42_3_1"/>
<dbReference type="InParanoid" id="Q9QY31"/>
<dbReference type="OMA" id="PWDRSSA"/>
<dbReference type="OrthoDB" id="5428132at2759"/>
<dbReference type="PhylomeDB" id="Q9QY31"/>
<dbReference type="TreeFam" id="TF315515"/>
<dbReference type="BioGRID-ORCS" id="30927">
    <property type="hits" value="3 hits in 77 CRISPR screens"/>
</dbReference>
<dbReference type="ChiTaRS" id="Snai3">
    <property type="organism name" value="mouse"/>
</dbReference>
<dbReference type="PRO" id="PR:Q9QY31"/>
<dbReference type="Proteomes" id="UP000000589">
    <property type="component" value="Chromosome 8"/>
</dbReference>
<dbReference type="RNAct" id="Q9QY31">
    <property type="molecule type" value="protein"/>
</dbReference>
<dbReference type="Bgee" id="ENSMUSG00000006587">
    <property type="expression patterns" value="Expressed in epithelium of urethra and 76 other cell types or tissues"/>
</dbReference>
<dbReference type="GO" id="GO:0005634">
    <property type="term" value="C:nucleus"/>
    <property type="evidence" value="ECO:0000314"/>
    <property type="project" value="MGI"/>
</dbReference>
<dbReference type="GO" id="GO:0005667">
    <property type="term" value="C:transcription regulator complex"/>
    <property type="evidence" value="ECO:0000314"/>
    <property type="project" value="MGI"/>
</dbReference>
<dbReference type="GO" id="GO:0003700">
    <property type="term" value="F:DNA-binding transcription factor activity"/>
    <property type="evidence" value="ECO:0000314"/>
    <property type="project" value="MGI"/>
</dbReference>
<dbReference type="GO" id="GO:0000981">
    <property type="term" value="F:DNA-binding transcription factor activity, RNA polymerase II-specific"/>
    <property type="evidence" value="ECO:0000314"/>
    <property type="project" value="MGI"/>
</dbReference>
<dbReference type="GO" id="GO:0001227">
    <property type="term" value="F:DNA-binding transcription repressor activity, RNA polymerase II-specific"/>
    <property type="evidence" value="ECO:0000314"/>
    <property type="project" value="NTNU_SB"/>
</dbReference>
<dbReference type="GO" id="GO:0000978">
    <property type="term" value="F:RNA polymerase II cis-regulatory region sequence-specific DNA binding"/>
    <property type="evidence" value="ECO:0000314"/>
    <property type="project" value="MGI"/>
</dbReference>
<dbReference type="GO" id="GO:0000977">
    <property type="term" value="F:RNA polymerase II transcription regulatory region sequence-specific DNA binding"/>
    <property type="evidence" value="ECO:0000314"/>
    <property type="project" value="NTNU_SB"/>
</dbReference>
<dbReference type="GO" id="GO:0008270">
    <property type="term" value="F:zinc ion binding"/>
    <property type="evidence" value="ECO:0007669"/>
    <property type="project" value="UniProtKB-KW"/>
</dbReference>
<dbReference type="GO" id="GO:0000122">
    <property type="term" value="P:negative regulation of transcription by RNA polymerase II"/>
    <property type="evidence" value="ECO:0000314"/>
    <property type="project" value="NTNU_SB"/>
</dbReference>
<dbReference type="GO" id="GO:0006355">
    <property type="term" value="P:regulation of DNA-templated transcription"/>
    <property type="evidence" value="ECO:0000314"/>
    <property type="project" value="MGI"/>
</dbReference>
<dbReference type="GO" id="GO:0006357">
    <property type="term" value="P:regulation of transcription by RNA polymerase II"/>
    <property type="evidence" value="ECO:0000314"/>
    <property type="project" value="MGI"/>
</dbReference>
<dbReference type="FunFam" id="3.30.160.60:FF:000085">
    <property type="entry name" value="Snail zinc finger protein"/>
    <property type="match status" value="1"/>
</dbReference>
<dbReference type="FunFam" id="3.30.160.60:FF:000942">
    <property type="entry name" value="Snail zinc finger protein"/>
    <property type="match status" value="1"/>
</dbReference>
<dbReference type="FunFam" id="3.30.160.60:FF:000207">
    <property type="entry name" value="zinc finger protein SNAI2"/>
    <property type="match status" value="1"/>
</dbReference>
<dbReference type="FunFam" id="3.30.160.60:FF:001965">
    <property type="entry name" value="Zinc finger protein SNAI3"/>
    <property type="match status" value="1"/>
</dbReference>
<dbReference type="Gene3D" id="3.30.160.60">
    <property type="entry name" value="Classic Zinc Finger"/>
    <property type="match status" value="4"/>
</dbReference>
<dbReference type="InterPro" id="IPR050527">
    <property type="entry name" value="Snail/Krueppel_Znf"/>
</dbReference>
<dbReference type="InterPro" id="IPR036236">
    <property type="entry name" value="Znf_C2H2_sf"/>
</dbReference>
<dbReference type="InterPro" id="IPR013087">
    <property type="entry name" value="Znf_C2H2_type"/>
</dbReference>
<dbReference type="PANTHER" id="PTHR24388">
    <property type="entry name" value="ZINC FINGER PROTEIN"/>
    <property type="match status" value="1"/>
</dbReference>
<dbReference type="PANTHER" id="PTHR24388:SF40">
    <property type="entry name" value="ZINC FINGER PROTEIN SNAI3"/>
    <property type="match status" value="1"/>
</dbReference>
<dbReference type="Pfam" id="PF00096">
    <property type="entry name" value="zf-C2H2"/>
    <property type="match status" value="4"/>
</dbReference>
<dbReference type="SMART" id="SM00355">
    <property type="entry name" value="ZnF_C2H2"/>
    <property type="match status" value="5"/>
</dbReference>
<dbReference type="SUPFAM" id="SSF57667">
    <property type="entry name" value="beta-beta-alpha zinc fingers"/>
    <property type="match status" value="3"/>
</dbReference>
<dbReference type="PROSITE" id="PS00028">
    <property type="entry name" value="ZINC_FINGER_C2H2_1"/>
    <property type="match status" value="4"/>
</dbReference>
<dbReference type="PROSITE" id="PS50157">
    <property type="entry name" value="ZINC_FINGER_C2H2_2"/>
    <property type="match status" value="5"/>
</dbReference>
<gene>
    <name type="primary">Snai3</name>
    <name type="synonym">Smuc</name>
    <name type="synonym">Zfp293</name>
</gene>
<organism>
    <name type="scientific">Mus musculus</name>
    <name type="common">Mouse</name>
    <dbReference type="NCBI Taxonomy" id="10090"/>
    <lineage>
        <taxon>Eukaryota</taxon>
        <taxon>Metazoa</taxon>
        <taxon>Chordata</taxon>
        <taxon>Craniata</taxon>
        <taxon>Vertebrata</taxon>
        <taxon>Euteleostomi</taxon>
        <taxon>Mammalia</taxon>
        <taxon>Eutheria</taxon>
        <taxon>Euarchontoglires</taxon>
        <taxon>Glires</taxon>
        <taxon>Rodentia</taxon>
        <taxon>Myomorpha</taxon>
        <taxon>Muroidea</taxon>
        <taxon>Muridae</taxon>
        <taxon>Murinae</taxon>
        <taxon>Mus</taxon>
        <taxon>Mus</taxon>
    </lineage>
</organism>